<reference key="1">
    <citation type="journal article" date="2007" name="PLoS ONE">
        <title>Analysis of the neurotoxin complex genes in Clostridium botulinum A1-A4 and B1 strains: BoNT/A3, /Ba4 and /B1 clusters are located within plasmids.</title>
        <authorList>
            <person name="Smith T.J."/>
            <person name="Hill K.K."/>
            <person name="Foley B.T."/>
            <person name="Detter J.C."/>
            <person name="Munk A.C."/>
            <person name="Bruce D.C."/>
            <person name="Doggett N.A."/>
            <person name="Smith L.A."/>
            <person name="Marks J.D."/>
            <person name="Xie G."/>
            <person name="Brettin T.S."/>
        </authorList>
    </citation>
    <scope>NUCLEOTIDE SEQUENCE [LARGE SCALE GENOMIC DNA]</scope>
    <source>
        <strain>Loch Maree / Type A3</strain>
    </source>
</reference>
<name>TAL_CLOBM</name>
<protein>
    <recommendedName>
        <fullName evidence="1">Probable transaldolase</fullName>
        <ecNumber evidence="1">2.2.1.2</ecNumber>
    </recommendedName>
</protein>
<evidence type="ECO:0000255" key="1">
    <source>
        <dbReference type="HAMAP-Rule" id="MF_00494"/>
    </source>
</evidence>
<sequence>MKIFIDTANVEEIRKASELGVLSGVTTNPSLIAKEGRDLKEVVEEICSIVDGPISAEVISLEHEKMIEEGRELSKLHKNIVIKIPMCEEGLKAVSVLSKEGIKTNVTLIFSSMQALLAARAGATYVSPFLGRLDDIGNPGIEVVEQIADMFKIHEIKTEIIAASVRTPMHVLEAAMAGSHIATIPYKVIIQMSKHALTDIGIEKFMKDYEKAFGENK</sequence>
<gene>
    <name evidence="1" type="primary">tal</name>
    <name type="ordered locus">CLK_0735</name>
</gene>
<accession>B1L010</accession>
<feature type="chain" id="PRO_1000126298" description="Probable transaldolase">
    <location>
        <begin position="1"/>
        <end position="217"/>
    </location>
</feature>
<feature type="active site" description="Schiff-base intermediate with substrate" evidence="1">
    <location>
        <position position="83"/>
    </location>
</feature>
<organism>
    <name type="scientific">Clostridium botulinum (strain Loch Maree / Type A3)</name>
    <dbReference type="NCBI Taxonomy" id="498214"/>
    <lineage>
        <taxon>Bacteria</taxon>
        <taxon>Bacillati</taxon>
        <taxon>Bacillota</taxon>
        <taxon>Clostridia</taxon>
        <taxon>Eubacteriales</taxon>
        <taxon>Clostridiaceae</taxon>
        <taxon>Clostridium</taxon>
    </lineage>
</organism>
<proteinExistence type="inferred from homology"/>
<comment type="function">
    <text evidence="1">Transaldolase is important for the balance of metabolites in the pentose-phosphate pathway.</text>
</comment>
<comment type="catalytic activity">
    <reaction evidence="1">
        <text>D-sedoheptulose 7-phosphate + D-glyceraldehyde 3-phosphate = D-erythrose 4-phosphate + beta-D-fructose 6-phosphate</text>
        <dbReference type="Rhea" id="RHEA:17053"/>
        <dbReference type="ChEBI" id="CHEBI:16897"/>
        <dbReference type="ChEBI" id="CHEBI:57483"/>
        <dbReference type="ChEBI" id="CHEBI:57634"/>
        <dbReference type="ChEBI" id="CHEBI:59776"/>
        <dbReference type="EC" id="2.2.1.2"/>
    </reaction>
</comment>
<comment type="pathway">
    <text evidence="1">Carbohydrate degradation; pentose phosphate pathway; D-glyceraldehyde 3-phosphate and beta-D-fructose 6-phosphate from D-ribose 5-phosphate and D-xylulose 5-phosphate (non-oxidative stage): step 2/3.</text>
</comment>
<comment type="subcellular location">
    <subcellularLocation>
        <location evidence="1">Cytoplasm</location>
    </subcellularLocation>
</comment>
<comment type="similarity">
    <text evidence="1">Belongs to the transaldolase family. Type 3B subfamily.</text>
</comment>
<keyword id="KW-0963">Cytoplasm</keyword>
<keyword id="KW-0570">Pentose shunt</keyword>
<keyword id="KW-0704">Schiff base</keyword>
<keyword id="KW-0808">Transferase</keyword>
<dbReference type="EC" id="2.2.1.2" evidence="1"/>
<dbReference type="EMBL" id="CP000962">
    <property type="protein sequence ID" value="ACA54529.1"/>
    <property type="molecule type" value="Genomic_DNA"/>
</dbReference>
<dbReference type="RefSeq" id="WP_012342623.1">
    <property type="nucleotide sequence ID" value="NC_010520.1"/>
</dbReference>
<dbReference type="SMR" id="B1L010"/>
<dbReference type="KEGG" id="cbl:CLK_0735"/>
<dbReference type="HOGENOM" id="CLU_079764_0_0_9"/>
<dbReference type="UniPathway" id="UPA00115">
    <property type="reaction ID" value="UER00414"/>
</dbReference>
<dbReference type="GO" id="GO:0005737">
    <property type="term" value="C:cytoplasm"/>
    <property type="evidence" value="ECO:0007669"/>
    <property type="project" value="UniProtKB-SubCell"/>
</dbReference>
<dbReference type="GO" id="GO:0016832">
    <property type="term" value="F:aldehyde-lyase activity"/>
    <property type="evidence" value="ECO:0007669"/>
    <property type="project" value="InterPro"/>
</dbReference>
<dbReference type="GO" id="GO:0004801">
    <property type="term" value="F:transaldolase activity"/>
    <property type="evidence" value="ECO:0007669"/>
    <property type="project" value="UniProtKB-UniRule"/>
</dbReference>
<dbReference type="GO" id="GO:0005975">
    <property type="term" value="P:carbohydrate metabolic process"/>
    <property type="evidence" value="ECO:0007669"/>
    <property type="project" value="InterPro"/>
</dbReference>
<dbReference type="GO" id="GO:0006098">
    <property type="term" value="P:pentose-phosphate shunt"/>
    <property type="evidence" value="ECO:0007669"/>
    <property type="project" value="UniProtKB-UniRule"/>
</dbReference>
<dbReference type="CDD" id="cd00956">
    <property type="entry name" value="Transaldolase_FSA"/>
    <property type="match status" value="1"/>
</dbReference>
<dbReference type="FunFam" id="3.20.20.70:FF:000018">
    <property type="entry name" value="Probable transaldolase"/>
    <property type="match status" value="1"/>
</dbReference>
<dbReference type="Gene3D" id="3.20.20.70">
    <property type="entry name" value="Aldolase class I"/>
    <property type="match status" value="1"/>
</dbReference>
<dbReference type="HAMAP" id="MF_00494">
    <property type="entry name" value="Transaldolase_3b"/>
    <property type="match status" value="1"/>
</dbReference>
<dbReference type="InterPro" id="IPR013785">
    <property type="entry name" value="Aldolase_TIM"/>
</dbReference>
<dbReference type="InterPro" id="IPR001585">
    <property type="entry name" value="TAL/FSA"/>
</dbReference>
<dbReference type="InterPro" id="IPR022999">
    <property type="entry name" value="Transaldolase_3B"/>
</dbReference>
<dbReference type="InterPro" id="IPR004731">
    <property type="entry name" value="Transaldolase_3B/F6P_aldolase"/>
</dbReference>
<dbReference type="InterPro" id="IPR018225">
    <property type="entry name" value="Transaldolase_AS"/>
</dbReference>
<dbReference type="InterPro" id="IPR033919">
    <property type="entry name" value="TSA/FSA_arc/bac"/>
</dbReference>
<dbReference type="NCBIfam" id="TIGR00875">
    <property type="entry name" value="fsa_talC_mipB"/>
    <property type="match status" value="1"/>
</dbReference>
<dbReference type="PANTHER" id="PTHR10683">
    <property type="entry name" value="TRANSALDOLASE"/>
    <property type="match status" value="1"/>
</dbReference>
<dbReference type="PANTHER" id="PTHR10683:SF36">
    <property type="entry name" value="TRANSALDOLASE"/>
    <property type="match status" value="1"/>
</dbReference>
<dbReference type="Pfam" id="PF00923">
    <property type="entry name" value="TAL_FSA"/>
    <property type="match status" value="1"/>
</dbReference>
<dbReference type="SUPFAM" id="SSF51569">
    <property type="entry name" value="Aldolase"/>
    <property type="match status" value="1"/>
</dbReference>
<dbReference type="PROSITE" id="PS01054">
    <property type="entry name" value="TRANSALDOLASE_1"/>
    <property type="match status" value="1"/>
</dbReference>
<dbReference type="PROSITE" id="PS00958">
    <property type="entry name" value="TRANSALDOLASE_2"/>
    <property type="match status" value="1"/>
</dbReference>